<protein>
    <recommendedName>
        <fullName>trp operon leader peptide</fullName>
    </recommendedName>
</protein>
<dbReference type="EMBL" id="J01557">
    <property type="status" value="NOT_ANNOTATED_CDS"/>
    <property type="molecule type" value="Genomic_DNA"/>
</dbReference>
<dbReference type="PIR" id="A03592">
    <property type="entry name" value="LFEBWC"/>
</dbReference>
<dbReference type="RefSeq" id="WP_012905981.1">
    <property type="nucleotide sequence ID" value="NZ_JARHTI010000008.1"/>
</dbReference>
<dbReference type="GeneID" id="86976261"/>
<dbReference type="GO" id="GO:0000162">
    <property type="term" value="P:L-tryptophan biosynthetic process"/>
    <property type="evidence" value="ECO:0007669"/>
    <property type="project" value="UniProtKB-KW"/>
</dbReference>
<dbReference type="InterPro" id="IPR013205">
    <property type="entry name" value="Leader_Trp_op"/>
</dbReference>
<dbReference type="Pfam" id="PF08255">
    <property type="entry name" value="Leader_Trp"/>
    <property type="match status" value="1"/>
</dbReference>
<accession>P03056</accession>
<reference key="1">
    <citation type="journal article" date="1982" name="J. Bacteriol.">
        <title>Evolutionary divergence of the Citrobacter freundii tryptophan operon regulatory region: comparison with other enteric bacteria.</title>
        <authorList>
            <person name="Blumenberg M."/>
            <person name="Yanofsky C."/>
        </authorList>
    </citation>
    <scope>NUCLEOTIDE SEQUENCE [GENOMIC DNA]</scope>
</reference>
<comment type="function">
    <text>This protein is involved in control of the biosynthesis of tryptophan.</text>
</comment>
<keyword id="KW-0028">Amino-acid biosynthesis</keyword>
<keyword id="KW-0057">Aromatic amino acid biosynthesis</keyword>
<keyword id="KW-0428">Leader peptide</keyword>
<keyword id="KW-0822">Tryptophan biosynthesis</keyword>
<feature type="peptide" id="PRO_0000044021" description="trp operon leader peptide">
    <location>
        <begin position="1"/>
        <end position="14"/>
    </location>
</feature>
<sequence>MKATFVLHGWWRTS</sequence>
<organism>
    <name type="scientific">Citrobacter freundii</name>
    <dbReference type="NCBI Taxonomy" id="546"/>
    <lineage>
        <taxon>Bacteria</taxon>
        <taxon>Pseudomonadati</taxon>
        <taxon>Pseudomonadota</taxon>
        <taxon>Gammaproteobacteria</taxon>
        <taxon>Enterobacterales</taxon>
        <taxon>Enterobacteriaceae</taxon>
        <taxon>Citrobacter</taxon>
        <taxon>Citrobacter freundii complex</taxon>
    </lineage>
</organism>
<gene>
    <name type="primary">trpL</name>
</gene>
<name>LPW_CITFR</name>
<proteinExistence type="predicted"/>